<dbReference type="EMBL" id="CP000857">
    <property type="protein sequence ID" value="ACN46685.1"/>
    <property type="molecule type" value="Genomic_DNA"/>
</dbReference>
<dbReference type="RefSeq" id="WP_000873046.1">
    <property type="nucleotide sequence ID" value="NC_012125.1"/>
</dbReference>
<dbReference type="SMR" id="C0Q840"/>
<dbReference type="KEGG" id="sei:SPC_2581"/>
<dbReference type="HOGENOM" id="CLU_057831_2_0_6"/>
<dbReference type="Proteomes" id="UP000001599">
    <property type="component" value="Chromosome"/>
</dbReference>
<dbReference type="FunFam" id="1.10.10.10:FF:000196">
    <property type="entry name" value="UPF0502 protein YceH"/>
    <property type="match status" value="1"/>
</dbReference>
<dbReference type="Gene3D" id="1.10.10.10">
    <property type="entry name" value="Winged helix-like DNA-binding domain superfamily/Winged helix DNA-binding domain"/>
    <property type="match status" value="2"/>
</dbReference>
<dbReference type="HAMAP" id="MF_01584">
    <property type="entry name" value="UPF0502"/>
    <property type="match status" value="1"/>
</dbReference>
<dbReference type="InterPro" id="IPR007432">
    <property type="entry name" value="DUF480"/>
</dbReference>
<dbReference type="InterPro" id="IPR036388">
    <property type="entry name" value="WH-like_DNA-bd_sf"/>
</dbReference>
<dbReference type="InterPro" id="IPR036390">
    <property type="entry name" value="WH_DNA-bd_sf"/>
</dbReference>
<dbReference type="NCBIfam" id="NF008413">
    <property type="entry name" value="PRK11239.1"/>
    <property type="match status" value="1"/>
</dbReference>
<dbReference type="PANTHER" id="PTHR38768">
    <property type="entry name" value="UPF0502 PROTEIN YCEH"/>
    <property type="match status" value="1"/>
</dbReference>
<dbReference type="PANTHER" id="PTHR38768:SF1">
    <property type="entry name" value="UPF0502 PROTEIN YCEH"/>
    <property type="match status" value="1"/>
</dbReference>
<dbReference type="Pfam" id="PF04337">
    <property type="entry name" value="DUF480"/>
    <property type="match status" value="1"/>
</dbReference>
<dbReference type="SUPFAM" id="SSF46785">
    <property type="entry name" value="Winged helix' DNA-binding domain"/>
    <property type="match status" value="2"/>
</dbReference>
<accession>C0Q840</accession>
<protein>
    <recommendedName>
        <fullName evidence="1">UPF0502 protein YceH</fullName>
    </recommendedName>
</protein>
<gene>
    <name evidence="1" type="primary">yceH</name>
    <name type="ordered locus">SPC_2581</name>
</gene>
<reference key="1">
    <citation type="journal article" date="2009" name="PLoS ONE">
        <title>Salmonella paratyphi C: genetic divergence from Salmonella choleraesuis and pathogenic convergence with Salmonella typhi.</title>
        <authorList>
            <person name="Liu W.-Q."/>
            <person name="Feng Y."/>
            <person name="Wang Y."/>
            <person name="Zou Q.-H."/>
            <person name="Chen F."/>
            <person name="Guo J.-T."/>
            <person name="Peng Y.-H."/>
            <person name="Jin Y."/>
            <person name="Li Y.-G."/>
            <person name="Hu S.-N."/>
            <person name="Johnston R.N."/>
            <person name="Liu G.-R."/>
            <person name="Liu S.-L."/>
        </authorList>
    </citation>
    <scope>NUCLEOTIDE SEQUENCE [LARGE SCALE GENOMIC DNA]</scope>
    <source>
        <strain>RKS4594</strain>
    </source>
</reference>
<sequence length="215" mass="24120">MKYELTATEARVIGCLLEKQVTTPEQYPLSVNGVVTACNQKTNREPVMNLTEQEVQEQLDNLVKRHFLRTVSGFGNRVTKYEQRFCNSEFGDLKLSAAEVALVTTLLLRGAQTPGELRSRASRMHEFSDMAEVESTLERLASREDGPYVVRLAREPGKRESRYMHLFCGDVDELSLQTSAPESASGDIQSRVEALESEVAELKQRLDSLLAHLGE</sequence>
<proteinExistence type="inferred from homology"/>
<feature type="chain" id="PRO_1000185666" description="UPF0502 protein YceH">
    <location>
        <begin position="1"/>
        <end position="215"/>
    </location>
</feature>
<name>YCEH_SALPC</name>
<organism>
    <name type="scientific">Salmonella paratyphi C (strain RKS4594)</name>
    <dbReference type="NCBI Taxonomy" id="476213"/>
    <lineage>
        <taxon>Bacteria</taxon>
        <taxon>Pseudomonadati</taxon>
        <taxon>Pseudomonadota</taxon>
        <taxon>Gammaproteobacteria</taxon>
        <taxon>Enterobacterales</taxon>
        <taxon>Enterobacteriaceae</taxon>
        <taxon>Salmonella</taxon>
    </lineage>
</organism>
<comment type="similarity">
    <text evidence="1">Belongs to the UPF0502 family.</text>
</comment>
<evidence type="ECO:0000255" key="1">
    <source>
        <dbReference type="HAMAP-Rule" id="MF_01584"/>
    </source>
</evidence>